<gene>
    <name evidence="1" type="primary">dsdA</name>
    <name type="ordered locus">SeHA_C4132</name>
</gene>
<keyword id="KW-0456">Lyase</keyword>
<keyword id="KW-0663">Pyridoxal phosphate</keyword>
<dbReference type="EC" id="4.3.1.18" evidence="1"/>
<dbReference type="EMBL" id="CP001120">
    <property type="protein sequence ID" value="ACF68098.1"/>
    <property type="molecule type" value="Genomic_DNA"/>
</dbReference>
<dbReference type="RefSeq" id="WP_000427986.1">
    <property type="nucleotide sequence ID" value="NC_011083.1"/>
</dbReference>
<dbReference type="SMR" id="B4TA53"/>
<dbReference type="KEGG" id="seh:SeHA_C4132"/>
<dbReference type="HOGENOM" id="CLU_035707_0_0_6"/>
<dbReference type="Proteomes" id="UP000001866">
    <property type="component" value="Chromosome"/>
</dbReference>
<dbReference type="GO" id="GO:0008721">
    <property type="term" value="F:D-serine ammonia-lyase activity"/>
    <property type="evidence" value="ECO:0007669"/>
    <property type="project" value="UniProtKB-EC"/>
</dbReference>
<dbReference type="GO" id="GO:0016836">
    <property type="term" value="F:hydro-lyase activity"/>
    <property type="evidence" value="ECO:0007669"/>
    <property type="project" value="UniProtKB-UniRule"/>
</dbReference>
<dbReference type="GO" id="GO:0030170">
    <property type="term" value="F:pyridoxal phosphate binding"/>
    <property type="evidence" value="ECO:0007669"/>
    <property type="project" value="InterPro"/>
</dbReference>
<dbReference type="GO" id="GO:0036088">
    <property type="term" value="P:D-serine catabolic process"/>
    <property type="evidence" value="ECO:0007669"/>
    <property type="project" value="TreeGrafter"/>
</dbReference>
<dbReference type="GO" id="GO:0009097">
    <property type="term" value="P:isoleucine biosynthetic process"/>
    <property type="evidence" value="ECO:0007669"/>
    <property type="project" value="TreeGrafter"/>
</dbReference>
<dbReference type="CDD" id="cd06447">
    <property type="entry name" value="D-Ser-dehyd"/>
    <property type="match status" value="1"/>
</dbReference>
<dbReference type="FunFam" id="3.40.50.1100:FF:000018">
    <property type="entry name" value="D-serine dehydratase"/>
    <property type="match status" value="1"/>
</dbReference>
<dbReference type="Gene3D" id="3.40.50.1100">
    <property type="match status" value="2"/>
</dbReference>
<dbReference type="HAMAP" id="MF_01030">
    <property type="entry name" value="D_Ser_dehydrat"/>
    <property type="match status" value="1"/>
</dbReference>
<dbReference type="InterPro" id="IPR011780">
    <property type="entry name" value="D_Ser_am_lyase"/>
</dbReference>
<dbReference type="InterPro" id="IPR050147">
    <property type="entry name" value="Ser/Thr_Dehydratase"/>
</dbReference>
<dbReference type="InterPro" id="IPR000634">
    <property type="entry name" value="Ser/Thr_deHydtase_PyrdxlP-BS"/>
</dbReference>
<dbReference type="InterPro" id="IPR001926">
    <property type="entry name" value="TrpB-like_PALP"/>
</dbReference>
<dbReference type="InterPro" id="IPR036052">
    <property type="entry name" value="TrpB-like_PALP_sf"/>
</dbReference>
<dbReference type="NCBIfam" id="TIGR02035">
    <property type="entry name" value="D_Ser_am_lyase"/>
    <property type="match status" value="1"/>
</dbReference>
<dbReference type="NCBIfam" id="NF002823">
    <property type="entry name" value="PRK02991.1"/>
    <property type="match status" value="1"/>
</dbReference>
<dbReference type="PANTHER" id="PTHR48078:SF9">
    <property type="entry name" value="D-SERINE DEHYDRATASE"/>
    <property type="match status" value="1"/>
</dbReference>
<dbReference type="PANTHER" id="PTHR48078">
    <property type="entry name" value="THREONINE DEHYDRATASE, MITOCHONDRIAL-RELATED"/>
    <property type="match status" value="1"/>
</dbReference>
<dbReference type="Pfam" id="PF00291">
    <property type="entry name" value="PALP"/>
    <property type="match status" value="1"/>
</dbReference>
<dbReference type="SUPFAM" id="SSF53686">
    <property type="entry name" value="Tryptophan synthase beta subunit-like PLP-dependent enzymes"/>
    <property type="match status" value="1"/>
</dbReference>
<dbReference type="PROSITE" id="PS00165">
    <property type="entry name" value="DEHYDRATASE_SER_THR"/>
    <property type="match status" value="1"/>
</dbReference>
<name>SDHD_SALHS</name>
<accession>B4TA53</accession>
<sequence>MENIQKLIARYPLVEDLVALKETTWFNPGATSLAQGLPYVGLTEQDVNAAHDRLARFAPYLAKAFPQTAAAGGMIESDVVAIPAMQKRLEKEYGQTIDGEMLLKKDSHLAISGSIKARGGIYEVLTHAEKLALEAGLLTTDDDYSVLLSPEFKQFFSQYSIAVGSTGNLGLSIGIMSACIGFKVTVHMSADARAWKKAKLRSHGVTVVEYEDDYGVAVEQGRKAAQSDPNCFFIDDENSRTLFLGYAVAGQRLKAQFAQQGRVVDASHPLFVYLPCGVGGGPGGVAFGLKLAFGDNVHCFFAEPTHSPCMLLGVYTGLHDAISVQDIGIDNLTAADGLAVGRASGFVGRAMERLLDGLYTLDDQTMYDMLGWLAQEEGIRLEPSALAGMAGPQRICAAAAYQQRHGFSQTQLGNATHLVWATGGGMVPEDEMEQYLAKGR</sequence>
<reference key="1">
    <citation type="journal article" date="2011" name="J. Bacteriol.">
        <title>Comparative genomics of 28 Salmonella enterica isolates: evidence for CRISPR-mediated adaptive sublineage evolution.</title>
        <authorList>
            <person name="Fricke W.F."/>
            <person name="Mammel M.K."/>
            <person name="McDermott P.F."/>
            <person name="Tartera C."/>
            <person name="White D.G."/>
            <person name="Leclerc J.E."/>
            <person name="Ravel J."/>
            <person name="Cebula T.A."/>
        </authorList>
    </citation>
    <scope>NUCLEOTIDE SEQUENCE [LARGE SCALE GENOMIC DNA]</scope>
    <source>
        <strain>SL476</strain>
    </source>
</reference>
<comment type="catalytic activity">
    <reaction evidence="1">
        <text>D-serine = pyruvate + NH4(+)</text>
        <dbReference type="Rhea" id="RHEA:13977"/>
        <dbReference type="ChEBI" id="CHEBI:15361"/>
        <dbReference type="ChEBI" id="CHEBI:28938"/>
        <dbReference type="ChEBI" id="CHEBI:35247"/>
        <dbReference type="EC" id="4.3.1.18"/>
    </reaction>
</comment>
<comment type="cofactor">
    <cofactor evidence="1">
        <name>pyridoxal 5'-phosphate</name>
        <dbReference type="ChEBI" id="CHEBI:597326"/>
    </cofactor>
</comment>
<comment type="subunit">
    <text evidence="1">Monomer.</text>
</comment>
<comment type="similarity">
    <text evidence="1">Belongs to the serine/threonine dehydratase family. DsdA subfamily.</text>
</comment>
<feature type="chain" id="PRO_1000197948" description="D-serine dehydratase">
    <location>
        <begin position="1"/>
        <end position="440"/>
    </location>
</feature>
<feature type="modified residue" description="N6-(pyridoxal phosphate)lysine" evidence="1">
    <location>
        <position position="116"/>
    </location>
</feature>
<organism>
    <name type="scientific">Salmonella heidelberg (strain SL476)</name>
    <dbReference type="NCBI Taxonomy" id="454169"/>
    <lineage>
        <taxon>Bacteria</taxon>
        <taxon>Pseudomonadati</taxon>
        <taxon>Pseudomonadota</taxon>
        <taxon>Gammaproteobacteria</taxon>
        <taxon>Enterobacterales</taxon>
        <taxon>Enterobacteriaceae</taxon>
        <taxon>Salmonella</taxon>
    </lineage>
</organism>
<evidence type="ECO:0000255" key="1">
    <source>
        <dbReference type="HAMAP-Rule" id="MF_01030"/>
    </source>
</evidence>
<proteinExistence type="inferred from homology"/>
<protein>
    <recommendedName>
        <fullName evidence="1">D-serine dehydratase</fullName>
        <ecNumber evidence="1">4.3.1.18</ecNumber>
    </recommendedName>
    <alternativeName>
        <fullName evidence="1">D-serine deaminase</fullName>
        <shortName evidence="1">DSD</shortName>
    </alternativeName>
</protein>